<name>PYRH_STAAW</name>
<organism>
    <name type="scientific">Staphylococcus aureus (strain MW2)</name>
    <dbReference type="NCBI Taxonomy" id="196620"/>
    <lineage>
        <taxon>Bacteria</taxon>
        <taxon>Bacillati</taxon>
        <taxon>Bacillota</taxon>
        <taxon>Bacilli</taxon>
        <taxon>Bacillales</taxon>
        <taxon>Staphylococcaceae</taxon>
        <taxon>Staphylococcus</taxon>
    </lineage>
</organism>
<feature type="chain" id="PRO_0000143886" description="Uridylate kinase">
    <location>
        <begin position="1"/>
        <end position="240"/>
    </location>
</feature>
<feature type="region of interest" description="Involved in allosteric activation by GTP" evidence="1">
    <location>
        <begin position="21"/>
        <end position="26"/>
    </location>
</feature>
<feature type="binding site" evidence="1">
    <location>
        <begin position="13"/>
        <end position="16"/>
    </location>
    <ligand>
        <name>ATP</name>
        <dbReference type="ChEBI" id="CHEBI:30616"/>
    </ligand>
</feature>
<feature type="binding site" evidence="1">
    <location>
        <position position="55"/>
    </location>
    <ligand>
        <name>UMP</name>
        <dbReference type="ChEBI" id="CHEBI:57865"/>
    </ligand>
</feature>
<feature type="binding site" evidence="1">
    <location>
        <position position="56"/>
    </location>
    <ligand>
        <name>ATP</name>
        <dbReference type="ChEBI" id="CHEBI:30616"/>
    </ligand>
</feature>
<feature type="binding site" evidence="1">
    <location>
        <position position="60"/>
    </location>
    <ligand>
        <name>ATP</name>
        <dbReference type="ChEBI" id="CHEBI:30616"/>
    </ligand>
</feature>
<feature type="binding site" evidence="1">
    <location>
        <position position="75"/>
    </location>
    <ligand>
        <name>UMP</name>
        <dbReference type="ChEBI" id="CHEBI:57865"/>
    </ligand>
</feature>
<feature type="binding site" evidence="1">
    <location>
        <begin position="136"/>
        <end position="143"/>
    </location>
    <ligand>
        <name>UMP</name>
        <dbReference type="ChEBI" id="CHEBI:57865"/>
    </ligand>
</feature>
<feature type="binding site" evidence="1">
    <location>
        <position position="164"/>
    </location>
    <ligand>
        <name>ATP</name>
        <dbReference type="ChEBI" id="CHEBI:30616"/>
    </ligand>
</feature>
<feature type="binding site" evidence="1">
    <location>
        <position position="170"/>
    </location>
    <ligand>
        <name>ATP</name>
        <dbReference type="ChEBI" id="CHEBI:30616"/>
    </ligand>
</feature>
<feature type="binding site" evidence="1">
    <location>
        <position position="173"/>
    </location>
    <ligand>
        <name>ATP</name>
        <dbReference type="ChEBI" id="CHEBI:30616"/>
    </ligand>
</feature>
<keyword id="KW-0021">Allosteric enzyme</keyword>
<keyword id="KW-0067">ATP-binding</keyword>
<keyword id="KW-0963">Cytoplasm</keyword>
<keyword id="KW-0418">Kinase</keyword>
<keyword id="KW-0547">Nucleotide-binding</keyword>
<keyword id="KW-0665">Pyrimidine biosynthesis</keyword>
<keyword id="KW-0808">Transferase</keyword>
<protein>
    <recommendedName>
        <fullName evidence="1">Uridylate kinase</fullName>
        <shortName evidence="1">UK</shortName>
        <ecNumber evidence="1">2.7.4.22</ecNumber>
    </recommendedName>
    <alternativeName>
        <fullName evidence="1">Uridine monophosphate kinase</fullName>
        <shortName evidence="1">UMP kinase</shortName>
        <shortName evidence="1">UMPK</shortName>
    </alternativeName>
</protein>
<reference key="1">
    <citation type="journal article" date="2002" name="Lancet">
        <title>Genome and virulence determinants of high virulence community-acquired MRSA.</title>
        <authorList>
            <person name="Baba T."/>
            <person name="Takeuchi F."/>
            <person name="Kuroda M."/>
            <person name="Yuzawa H."/>
            <person name="Aoki K."/>
            <person name="Oguchi A."/>
            <person name="Nagai Y."/>
            <person name="Iwama N."/>
            <person name="Asano K."/>
            <person name="Naimi T."/>
            <person name="Kuroda H."/>
            <person name="Cui L."/>
            <person name="Yamamoto K."/>
            <person name="Hiramatsu K."/>
        </authorList>
    </citation>
    <scope>NUCLEOTIDE SEQUENCE [LARGE SCALE GENOMIC DNA]</scope>
    <source>
        <strain>MW2</strain>
    </source>
</reference>
<dbReference type="EC" id="2.7.4.22" evidence="1"/>
<dbReference type="EMBL" id="BA000033">
    <property type="protein sequence ID" value="BAB95006.1"/>
    <property type="molecule type" value="Genomic_DNA"/>
</dbReference>
<dbReference type="RefSeq" id="WP_000057330.1">
    <property type="nucleotide sequence ID" value="NC_003923.1"/>
</dbReference>
<dbReference type="SMR" id="P65937"/>
<dbReference type="GeneID" id="98345574"/>
<dbReference type="KEGG" id="sam:MW1141"/>
<dbReference type="HOGENOM" id="CLU_033861_0_0_9"/>
<dbReference type="UniPathway" id="UPA00159">
    <property type="reaction ID" value="UER00275"/>
</dbReference>
<dbReference type="GO" id="GO:0005737">
    <property type="term" value="C:cytoplasm"/>
    <property type="evidence" value="ECO:0007669"/>
    <property type="project" value="UniProtKB-SubCell"/>
</dbReference>
<dbReference type="GO" id="GO:0005524">
    <property type="term" value="F:ATP binding"/>
    <property type="evidence" value="ECO:0007669"/>
    <property type="project" value="UniProtKB-KW"/>
</dbReference>
<dbReference type="GO" id="GO:0033862">
    <property type="term" value="F:UMP kinase activity"/>
    <property type="evidence" value="ECO:0007669"/>
    <property type="project" value="UniProtKB-EC"/>
</dbReference>
<dbReference type="GO" id="GO:0044210">
    <property type="term" value="P:'de novo' CTP biosynthetic process"/>
    <property type="evidence" value="ECO:0007669"/>
    <property type="project" value="UniProtKB-UniRule"/>
</dbReference>
<dbReference type="GO" id="GO:0006225">
    <property type="term" value="P:UDP biosynthetic process"/>
    <property type="evidence" value="ECO:0007669"/>
    <property type="project" value="TreeGrafter"/>
</dbReference>
<dbReference type="CDD" id="cd04254">
    <property type="entry name" value="AAK_UMPK-PyrH-Ec"/>
    <property type="match status" value="1"/>
</dbReference>
<dbReference type="FunFam" id="3.40.1160.10:FF:000001">
    <property type="entry name" value="Uridylate kinase"/>
    <property type="match status" value="1"/>
</dbReference>
<dbReference type="Gene3D" id="3.40.1160.10">
    <property type="entry name" value="Acetylglutamate kinase-like"/>
    <property type="match status" value="1"/>
</dbReference>
<dbReference type="HAMAP" id="MF_01220_B">
    <property type="entry name" value="PyrH_B"/>
    <property type="match status" value="1"/>
</dbReference>
<dbReference type="InterPro" id="IPR036393">
    <property type="entry name" value="AceGlu_kinase-like_sf"/>
</dbReference>
<dbReference type="InterPro" id="IPR001048">
    <property type="entry name" value="Asp/Glu/Uridylate_kinase"/>
</dbReference>
<dbReference type="InterPro" id="IPR011817">
    <property type="entry name" value="Uridylate_kinase"/>
</dbReference>
<dbReference type="InterPro" id="IPR015963">
    <property type="entry name" value="Uridylate_kinase_bac"/>
</dbReference>
<dbReference type="NCBIfam" id="TIGR02075">
    <property type="entry name" value="pyrH_bact"/>
    <property type="match status" value="1"/>
</dbReference>
<dbReference type="PANTHER" id="PTHR42833">
    <property type="entry name" value="URIDYLATE KINASE"/>
    <property type="match status" value="1"/>
</dbReference>
<dbReference type="PANTHER" id="PTHR42833:SF4">
    <property type="entry name" value="URIDYLATE KINASE PUMPKIN, CHLOROPLASTIC"/>
    <property type="match status" value="1"/>
</dbReference>
<dbReference type="Pfam" id="PF00696">
    <property type="entry name" value="AA_kinase"/>
    <property type="match status" value="1"/>
</dbReference>
<dbReference type="PIRSF" id="PIRSF005650">
    <property type="entry name" value="Uridylate_kin"/>
    <property type="match status" value="1"/>
</dbReference>
<dbReference type="SUPFAM" id="SSF53633">
    <property type="entry name" value="Carbamate kinase-like"/>
    <property type="match status" value="1"/>
</dbReference>
<evidence type="ECO:0000255" key="1">
    <source>
        <dbReference type="HAMAP-Rule" id="MF_01220"/>
    </source>
</evidence>
<accession>P65937</accession>
<accession>P59006</accession>
<accession>Q99UL3</accession>
<gene>
    <name evidence="1" type="primary">pyrH</name>
    <name type="synonym">smbA</name>
    <name type="ordered locus">MW1141</name>
</gene>
<comment type="function">
    <text evidence="1">Catalyzes the reversible phosphorylation of UMP to UDP.</text>
</comment>
<comment type="catalytic activity">
    <reaction evidence="1">
        <text>UMP + ATP = UDP + ADP</text>
        <dbReference type="Rhea" id="RHEA:24400"/>
        <dbReference type="ChEBI" id="CHEBI:30616"/>
        <dbReference type="ChEBI" id="CHEBI:57865"/>
        <dbReference type="ChEBI" id="CHEBI:58223"/>
        <dbReference type="ChEBI" id="CHEBI:456216"/>
        <dbReference type="EC" id="2.7.4.22"/>
    </reaction>
</comment>
<comment type="activity regulation">
    <text evidence="1">Allosterically activated by GTP. Inhibited by UTP.</text>
</comment>
<comment type="pathway">
    <text evidence="1">Pyrimidine metabolism; CTP biosynthesis via de novo pathway; UDP from UMP (UMPK route): step 1/1.</text>
</comment>
<comment type="subunit">
    <text evidence="1">Homohexamer.</text>
</comment>
<comment type="subcellular location">
    <subcellularLocation>
        <location evidence="1">Cytoplasm</location>
    </subcellularLocation>
</comment>
<comment type="similarity">
    <text evidence="1">Belongs to the UMP kinase family.</text>
</comment>
<proteinExistence type="inferred from homology"/>
<sequence length="240" mass="26145">MAQISKYKRVVLKLSGEALAGEKGFGINPVIIKSVAEQVAEVAKMDCEIAVIVGGGNIWRGKTGSDLGMDRGTADYMGMLATVMNALALQDSLEQLDCDTRVLTSIEMKQVAEPYIRRRAIRHLEKKRVVIFAAGIGNPYFSTDTTAALRAAEVEADVILMGKNNVDGVYSADPKVNKDAVKYEHLTHIQMLQEGLQVMDSTASSFCMDNNIPLTVFSIMEEGNIKRAVMGEKIGTLITK</sequence>